<protein>
    <recommendedName>
        <fullName evidence="1">Large ribosomal subunit protein bL34</fullName>
    </recommendedName>
    <alternativeName>
        <fullName>50S ribosomal protein L34</fullName>
    </alternativeName>
</protein>
<proteinExistence type="inferred from homology"/>
<accession>P0A5W5</accession>
<accession>A0A1R3Y5V9</accession>
<accession>P52829</accession>
<accession>X2BPR0</accession>
<comment type="similarity">
    <text evidence="1">Belongs to the bacterial ribosomal protein bL34 family.</text>
</comment>
<sequence length="47" mass="5625">MTKGKRTFQPNNRRRARVHGFRLRMRTRAGRSIVSSRRRKGRRTLSA</sequence>
<name>RL34_MYCBO</name>
<keyword id="KW-1185">Reference proteome</keyword>
<keyword id="KW-0687">Ribonucleoprotein</keyword>
<keyword id="KW-0689">Ribosomal protein</keyword>
<feature type="chain" id="PRO_0000187411" description="Large ribosomal subunit protein bL34">
    <location>
        <begin position="1"/>
        <end position="47"/>
    </location>
</feature>
<organism>
    <name type="scientific">Mycobacterium bovis (strain ATCC BAA-935 / AF2122/97)</name>
    <dbReference type="NCBI Taxonomy" id="233413"/>
    <lineage>
        <taxon>Bacteria</taxon>
        <taxon>Bacillati</taxon>
        <taxon>Actinomycetota</taxon>
        <taxon>Actinomycetes</taxon>
        <taxon>Mycobacteriales</taxon>
        <taxon>Mycobacteriaceae</taxon>
        <taxon>Mycobacterium</taxon>
        <taxon>Mycobacterium tuberculosis complex</taxon>
    </lineage>
</organism>
<gene>
    <name type="primary">rpmH</name>
    <name type="ordered locus">BQ2027_MB3955C</name>
</gene>
<reference key="1">
    <citation type="journal article" date="2003" name="Proc. Natl. Acad. Sci. U.S.A.">
        <title>The complete genome sequence of Mycobacterium bovis.</title>
        <authorList>
            <person name="Garnier T."/>
            <person name="Eiglmeier K."/>
            <person name="Camus J.-C."/>
            <person name="Medina N."/>
            <person name="Mansoor H."/>
            <person name="Pryor M."/>
            <person name="Duthoy S."/>
            <person name="Grondin S."/>
            <person name="Lacroix C."/>
            <person name="Monsempe C."/>
            <person name="Simon S."/>
            <person name="Harris B."/>
            <person name="Atkin R."/>
            <person name="Doggett J."/>
            <person name="Mayes R."/>
            <person name="Keating L."/>
            <person name="Wheeler P.R."/>
            <person name="Parkhill J."/>
            <person name="Barrell B.G."/>
            <person name="Cole S.T."/>
            <person name="Gordon S.V."/>
            <person name="Hewinson R.G."/>
        </authorList>
    </citation>
    <scope>NUCLEOTIDE SEQUENCE [LARGE SCALE GENOMIC DNA]</scope>
    <source>
        <strain>ATCC BAA-935 / AF2122/97</strain>
    </source>
</reference>
<reference key="2">
    <citation type="journal article" date="2017" name="Genome Announc.">
        <title>Updated reference genome sequence and annotation of Mycobacterium bovis AF2122/97.</title>
        <authorList>
            <person name="Malone K.M."/>
            <person name="Farrell D."/>
            <person name="Stuber T.P."/>
            <person name="Schubert O.T."/>
            <person name="Aebersold R."/>
            <person name="Robbe-Austerman S."/>
            <person name="Gordon S.V."/>
        </authorList>
    </citation>
    <scope>NUCLEOTIDE SEQUENCE [LARGE SCALE GENOMIC DNA]</scope>
    <scope>GENOME REANNOTATION</scope>
    <source>
        <strain>ATCC BAA-935 / AF2122/97</strain>
    </source>
</reference>
<dbReference type="EMBL" id="LT708304">
    <property type="protein sequence ID" value="SIU02586.1"/>
    <property type="molecule type" value="Genomic_DNA"/>
</dbReference>
<dbReference type="RefSeq" id="NP_857590.1">
    <property type="nucleotide sequence ID" value="NC_002945.3"/>
</dbReference>
<dbReference type="RefSeq" id="WP_003400206.1">
    <property type="nucleotide sequence ID" value="NC_002945.4"/>
</dbReference>
<dbReference type="SMR" id="P0A5W5"/>
<dbReference type="GeneID" id="45427924"/>
<dbReference type="KEGG" id="mbo:BQ2027_MB3955C"/>
<dbReference type="PATRIC" id="fig|233413.5.peg.4333"/>
<dbReference type="Proteomes" id="UP000001419">
    <property type="component" value="Chromosome"/>
</dbReference>
<dbReference type="GO" id="GO:1990904">
    <property type="term" value="C:ribonucleoprotein complex"/>
    <property type="evidence" value="ECO:0007669"/>
    <property type="project" value="UniProtKB-KW"/>
</dbReference>
<dbReference type="GO" id="GO:0005840">
    <property type="term" value="C:ribosome"/>
    <property type="evidence" value="ECO:0007669"/>
    <property type="project" value="UniProtKB-KW"/>
</dbReference>
<dbReference type="GO" id="GO:0003735">
    <property type="term" value="F:structural constituent of ribosome"/>
    <property type="evidence" value="ECO:0007669"/>
    <property type="project" value="InterPro"/>
</dbReference>
<dbReference type="GO" id="GO:0006412">
    <property type="term" value="P:translation"/>
    <property type="evidence" value="ECO:0007669"/>
    <property type="project" value="UniProtKB-UniRule"/>
</dbReference>
<dbReference type="FunFam" id="1.10.287.3980:FF:000001">
    <property type="entry name" value="Mitochondrial ribosomal protein L34"/>
    <property type="match status" value="1"/>
</dbReference>
<dbReference type="Gene3D" id="1.10.287.3980">
    <property type="match status" value="1"/>
</dbReference>
<dbReference type="HAMAP" id="MF_00391">
    <property type="entry name" value="Ribosomal_bL34"/>
    <property type="match status" value="1"/>
</dbReference>
<dbReference type="InterPro" id="IPR000271">
    <property type="entry name" value="Ribosomal_bL34"/>
</dbReference>
<dbReference type="InterPro" id="IPR020939">
    <property type="entry name" value="Ribosomal_bL34_CS"/>
</dbReference>
<dbReference type="NCBIfam" id="TIGR01030">
    <property type="entry name" value="rpmH_bact"/>
    <property type="match status" value="1"/>
</dbReference>
<dbReference type="PANTHER" id="PTHR14503:SF4">
    <property type="entry name" value="LARGE RIBOSOMAL SUBUNIT PROTEIN BL34M"/>
    <property type="match status" value="1"/>
</dbReference>
<dbReference type="PANTHER" id="PTHR14503">
    <property type="entry name" value="MITOCHONDRIAL RIBOSOMAL PROTEIN 34 FAMILY MEMBER"/>
    <property type="match status" value="1"/>
</dbReference>
<dbReference type="Pfam" id="PF00468">
    <property type="entry name" value="Ribosomal_L34"/>
    <property type="match status" value="1"/>
</dbReference>
<dbReference type="PROSITE" id="PS00784">
    <property type="entry name" value="RIBOSOMAL_L34"/>
    <property type="match status" value="1"/>
</dbReference>
<evidence type="ECO:0000305" key="1"/>